<comment type="function">
    <text evidence="1">Catalyzes the reversible isomerization between hydroxypyruvate and 2-hydroxy-3-oxopropanoate (also termed tartronate semialdehyde).</text>
</comment>
<comment type="catalytic activity">
    <reaction>
        <text>3-hydroxypyruvate = 2-hydroxy-3-oxopropanoate</text>
        <dbReference type="Rhea" id="RHEA:11952"/>
        <dbReference type="ChEBI" id="CHEBI:17180"/>
        <dbReference type="ChEBI" id="CHEBI:57978"/>
        <dbReference type="EC" id="5.3.1.22"/>
    </reaction>
</comment>
<comment type="similarity">
    <text evidence="3">Belongs to the hyi family.</text>
</comment>
<name>HYI_CAEEL</name>
<protein>
    <recommendedName>
        <fullName>Putative hydroxypyruvate isomerase</fullName>
        <ecNumber>5.3.1.22</ecNumber>
    </recommendedName>
</protein>
<accession>Q11185</accession>
<gene>
    <name type="ORF">C05D11.5</name>
</gene>
<sequence length="262" mass="29659">MSGTNRVAANLNMLFTNLPLLQRYGAAASAGFKLVEVSIPYTEPAEKLREAADEYHLKHTLINAPPGNWDDGFRGLASLKSAKKEFRKSLDTAIEYAKALGCCRVHVMAGIPKSDDDLENAHQTYSENVRFAAEKFKEHKLICLIEPINKYTIPGYHLNNYEDAMDVIQMDQSNNLKIQYDTFHAQQINGQIGAIMRKLKDYIGYIQVAQVPNRGACDTRGEIDYHFIFDEIRSINPSWVIGAEYLDAKPSFNWIENMSLSF</sequence>
<dbReference type="EC" id="5.3.1.22"/>
<dbReference type="EMBL" id="FO080365">
    <property type="protein sequence ID" value="CCD63194.1"/>
    <property type="molecule type" value="Genomic_DNA"/>
</dbReference>
<dbReference type="PIR" id="A88482">
    <property type="entry name" value="A88482"/>
</dbReference>
<dbReference type="RefSeq" id="NP_498404.1">
    <property type="nucleotide sequence ID" value="NM_066003.7"/>
</dbReference>
<dbReference type="SMR" id="Q11185"/>
<dbReference type="FunCoup" id="Q11185">
    <property type="interactions" value="71"/>
</dbReference>
<dbReference type="STRING" id="6239.C05D11.5.1"/>
<dbReference type="PaxDb" id="6239-C05D11.5"/>
<dbReference type="PeptideAtlas" id="Q11185"/>
<dbReference type="EnsemblMetazoa" id="C05D11.5.1">
    <property type="protein sequence ID" value="C05D11.5.1"/>
    <property type="gene ID" value="WBGene00015483"/>
</dbReference>
<dbReference type="GeneID" id="182258"/>
<dbReference type="KEGG" id="cel:CELE_C05D11.5"/>
<dbReference type="UCSC" id="C05D11.5">
    <property type="organism name" value="c. elegans"/>
</dbReference>
<dbReference type="AGR" id="WB:WBGene00015483"/>
<dbReference type="CTD" id="182258"/>
<dbReference type="WormBase" id="C05D11.5">
    <property type="protein sequence ID" value="CE01135"/>
    <property type="gene ID" value="WBGene00015483"/>
</dbReference>
<dbReference type="eggNOG" id="KOG4518">
    <property type="taxonomic scope" value="Eukaryota"/>
</dbReference>
<dbReference type="GeneTree" id="ENSGT00390000005462"/>
<dbReference type="HOGENOM" id="CLU_050006_1_1_1"/>
<dbReference type="InParanoid" id="Q11185"/>
<dbReference type="OMA" id="VECHWPY"/>
<dbReference type="OrthoDB" id="4214675at2759"/>
<dbReference type="PhylomeDB" id="Q11185"/>
<dbReference type="PRO" id="PR:Q11185"/>
<dbReference type="Proteomes" id="UP000001940">
    <property type="component" value="Chromosome III"/>
</dbReference>
<dbReference type="Bgee" id="WBGene00015483">
    <property type="expression patterns" value="Expressed in material anatomical entity and 5 other cell types or tissues"/>
</dbReference>
<dbReference type="GO" id="GO:0008903">
    <property type="term" value="F:hydroxypyruvate isomerase activity"/>
    <property type="evidence" value="ECO:0000318"/>
    <property type="project" value="GO_Central"/>
</dbReference>
<dbReference type="GO" id="GO:0046487">
    <property type="term" value="P:glyoxylate metabolic process"/>
    <property type="evidence" value="ECO:0000318"/>
    <property type="project" value="GO_Central"/>
</dbReference>
<dbReference type="FunFam" id="3.20.20.150:FF:000007">
    <property type="entry name" value="Hydroxypyruvate isomerase"/>
    <property type="match status" value="1"/>
</dbReference>
<dbReference type="Gene3D" id="3.20.20.150">
    <property type="entry name" value="Divalent-metal-dependent TIM barrel enzymes"/>
    <property type="match status" value="1"/>
</dbReference>
<dbReference type="InterPro" id="IPR026040">
    <property type="entry name" value="HyI-like"/>
</dbReference>
<dbReference type="InterPro" id="IPR050417">
    <property type="entry name" value="Sugar_Epim/Isomerase"/>
</dbReference>
<dbReference type="InterPro" id="IPR036237">
    <property type="entry name" value="Xyl_isomerase-like_sf"/>
</dbReference>
<dbReference type="InterPro" id="IPR013022">
    <property type="entry name" value="Xyl_isomerase-like_TIM-brl"/>
</dbReference>
<dbReference type="PANTHER" id="PTHR43489:SF6">
    <property type="entry name" value="HYDROXYPYRUVATE ISOMERASE-RELATED"/>
    <property type="match status" value="1"/>
</dbReference>
<dbReference type="PANTHER" id="PTHR43489">
    <property type="entry name" value="ISOMERASE"/>
    <property type="match status" value="1"/>
</dbReference>
<dbReference type="Pfam" id="PF01261">
    <property type="entry name" value="AP_endonuc_2"/>
    <property type="match status" value="1"/>
</dbReference>
<dbReference type="PIRSF" id="PIRSF006241">
    <property type="entry name" value="HyI"/>
    <property type="match status" value="1"/>
</dbReference>
<dbReference type="SUPFAM" id="SSF51658">
    <property type="entry name" value="Xylose isomerase-like"/>
    <property type="match status" value="1"/>
</dbReference>
<evidence type="ECO:0000250" key="1"/>
<evidence type="ECO:0000250" key="2">
    <source>
        <dbReference type="UniProtKB" id="Q9WYP7"/>
    </source>
</evidence>
<evidence type="ECO:0000305" key="3"/>
<proteinExistence type="inferred from homology"/>
<reference key="1">
    <citation type="journal article" date="1998" name="Science">
        <title>Genome sequence of the nematode C. elegans: a platform for investigating biology.</title>
        <authorList>
            <consortium name="The C. elegans sequencing consortium"/>
        </authorList>
    </citation>
    <scope>NUCLEOTIDE SEQUENCE [LARGE SCALE GENOMIC DNA]</scope>
    <source>
        <strain>Bristol N2</strain>
    </source>
</reference>
<organism>
    <name type="scientific">Caenorhabditis elegans</name>
    <dbReference type="NCBI Taxonomy" id="6239"/>
    <lineage>
        <taxon>Eukaryota</taxon>
        <taxon>Metazoa</taxon>
        <taxon>Ecdysozoa</taxon>
        <taxon>Nematoda</taxon>
        <taxon>Chromadorea</taxon>
        <taxon>Rhabditida</taxon>
        <taxon>Rhabditina</taxon>
        <taxon>Rhabditomorpha</taxon>
        <taxon>Rhabditoidea</taxon>
        <taxon>Rhabditidae</taxon>
        <taxon>Peloderinae</taxon>
        <taxon>Caenorhabditis</taxon>
    </lineage>
</organism>
<feature type="chain" id="PRO_0000209115" description="Putative hydroxypyruvate isomerase">
    <location>
        <begin position="1"/>
        <end position="262"/>
    </location>
</feature>
<feature type="active site" description="Proton donor/acceptor" evidence="2">
    <location>
        <position position="146"/>
    </location>
</feature>
<feature type="active site" description="Proton donor/acceptor" evidence="2">
    <location>
        <position position="244"/>
    </location>
</feature>
<keyword id="KW-0413">Isomerase</keyword>
<keyword id="KW-1185">Reference proteome</keyword>